<dbReference type="EC" id="3.6.1.23" evidence="1"/>
<dbReference type="EMBL" id="CP000304">
    <property type="protein sequence ID" value="ABP78177.1"/>
    <property type="molecule type" value="Genomic_DNA"/>
</dbReference>
<dbReference type="RefSeq" id="WP_011911706.1">
    <property type="nucleotide sequence ID" value="NC_009434.1"/>
</dbReference>
<dbReference type="SMR" id="A4VGS6"/>
<dbReference type="GeneID" id="66819730"/>
<dbReference type="KEGG" id="psa:PST_0471"/>
<dbReference type="eggNOG" id="COG0756">
    <property type="taxonomic scope" value="Bacteria"/>
</dbReference>
<dbReference type="HOGENOM" id="CLU_068508_1_1_6"/>
<dbReference type="UniPathway" id="UPA00610">
    <property type="reaction ID" value="UER00666"/>
</dbReference>
<dbReference type="Proteomes" id="UP000000233">
    <property type="component" value="Chromosome"/>
</dbReference>
<dbReference type="GO" id="GO:0004170">
    <property type="term" value="F:dUTP diphosphatase activity"/>
    <property type="evidence" value="ECO:0007669"/>
    <property type="project" value="UniProtKB-UniRule"/>
</dbReference>
<dbReference type="GO" id="GO:0000287">
    <property type="term" value="F:magnesium ion binding"/>
    <property type="evidence" value="ECO:0007669"/>
    <property type="project" value="UniProtKB-UniRule"/>
</dbReference>
<dbReference type="GO" id="GO:0006226">
    <property type="term" value="P:dUMP biosynthetic process"/>
    <property type="evidence" value="ECO:0007669"/>
    <property type="project" value="UniProtKB-UniRule"/>
</dbReference>
<dbReference type="GO" id="GO:0046081">
    <property type="term" value="P:dUTP catabolic process"/>
    <property type="evidence" value="ECO:0007669"/>
    <property type="project" value="InterPro"/>
</dbReference>
<dbReference type="CDD" id="cd07557">
    <property type="entry name" value="trimeric_dUTPase"/>
    <property type="match status" value="1"/>
</dbReference>
<dbReference type="FunFam" id="2.70.40.10:FF:000002">
    <property type="entry name" value="dUTP diphosphatase"/>
    <property type="match status" value="1"/>
</dbReference>
<dbReference type="Gene3D" id="2.70.40.10">
    <property type="match status" value="1"/>
</dbReference>
<dbReference type="HAMAP" id="MF_00116">
    <property type="entry name" value="dUTPase_bact"/>
    <property type="match status" value="1"/>
</dbReference>
<dbReference type="InterPro" id="IPR008181">
    <property type="entry name" value="dUTPase"/>
</dbReference>
<dbReference type="InterPro" id="IPR029054">
    <property type="entry name" value="dUTPase-like"/>
</dbReference>
<dbReference type="InterPro" id="IPR036157">
    <property type="entry name" value="dUTPase-like_sf"/>
</dbReference>
<dbReference type="InterPro" id="IPR033704">
    <property type="entry name" value="dUTPase_trimeric"/>
</dbReference>
<dbReference type="NCBIfam" id="TIGR00576">
    <property type="entry name" value="dut"/>
    <property type="match status" value="1"/>
</dbReference>
<dbReference type="NCBIfam" id="NF001862">
    <property type="entry name" value="PRK00601.1"/>
    <property type="match status" value="1"/>
</dbReference>
<dbReference type="PANTHER" id="PTHR11241">
    <property type="entry name" value="DEOXYURIDINE 5'-TRIPHOSPHATE NUCLEOTIDOHYDROLASE"/>
    <property type="match status" value="1"/>
</dbReference>
<dbReference type="PANTHER" id="PTHR11241:SF0">
    <property type="entry name" value="DEOXYURIDINE 5'-TRIPHOSPHATE NUCLEOTIDOHYDROLASE"/>
    <property type="match status" value="1"/>
</dbReference>
<dbReference type="Pfam" id="PF00692">
    <property type="entry name" value="dUTPase"/>
    <property type="match status" value="1"/>
</dbReference>
<dbReference type="SUPFAM" id="SSF51283">
    <property type="entry name" value="dUTPase-like"/>
    <property type="match status" value="1"/>
</dbReference>
<feature type="chain" id="PRO_1000015498" description="Deoxyuridine 5'-triphosphate nucleotidohydrolase">
    <location>
        <begin position="1"/>
        <end position="151"/>
    </location>
</feature>
<feature type="binding site" evidence="1">
    <location>
        <begin position="70"/>
        <end position="72"/>
    </location>
    <ligand>
        <name>substrate</name>
    </ligand>
</feature>
<feature type="binding site" evidence="1">
    <location>
        <position position="83"/>
    </location>
    <ligand>
        <name>substrate</name>
    </ligand>
</feature>
<feature type="binding site" evidence="1">
    <location>
        <begin position="87"/>
        <end position="89"/>
    </location>
    <ligand>
        <name>substrate</name>
    </ligand>
</feature>
<feature type="binding site" evidence="1">
    <location>
        <position position="97"/>
    </location>
    <ligand>
        <name>substrate</name>
    </ligand>
</feature>
<comment type="function">
    <text evidence="1">This enzyme is involved in nucleotide metabolism: it produces dUMP, the immediate precursor of thymidine nucleotides and it decreases the intracellular concentration of dUTP so that uracil cannot be incorporated into DNA.</text>
</comment>
<comment type="catalytic activity">
    <reaction evidence="1">
        <text>dUTP + H2O = dUMP + diphosphate + H(+)</text>
        <dbReference type="Rhea" id="RHEA:10248"/>
        <dbReference type="ChEBI" id="CHEBI:15377"/>
        <dbReference type="ChEBI" id="CHEBI:15378"/>
        <dbReference type="ChEBI" id="CHEBI:33019"/>
        <dbReference type="ChEBI" id="CHEBI:61555"/>
        <dbReference type="ChEBI" id="CHEBI:246422"/>
        <dbReference type="EC" id="3.6.1.23"/>
    </reaction>
</comment>
<comment type="cofactor">
    <cofactor evidence="1">
        <name>Mg(2+)</name>
        <dbReference type="ChEBI" id="CHEBI:18420"/>
    </cofactor>
</comment>
<comment type="pathway">
    <text evidence="1">Pyrimidine metabolism; dUMP biosynthesis; dUMP from dCTP (dUTP route): step 2/2.</text>
</comment>
<comment type="similarity">
    <text evidence="1">Belongs to the dUTPase family.</text>
</comment>
<gene>
    <name evidence="1" type="primary">dut</name>
    <name type="ordered locus">PST_0471</name>
</gene>
<organism>
    <name type="scientific">Stutzerimonas stutzeri (strain A1501)</name>
    <name type="common">Pseudomonas stutzeri</name>
    <dbReference type="NCBI Taxonomy" id="379731"/>
    <lineage>
        <taxon>Bacteria</taxon>
        <taxon>Pseudomonadati</taxon>
        <taxon>Pseudomonadota</taxon>
        <taxon>Gammaproteobacteria</taxon>
        <taxon>Pseudomonadales</taxon>
        <taxon>Pseudomonadaceae</taxon>
        <taxon>Stutzerimonas</taxon>
    </lineage>
</organism>
<protein>
    <recommendedName>
        <fullName evidence="1">Deoxyuridine 5'-triphosphate nucleotidohydrolase</fullName>
        <shortName evidence="1">dUTPase</shortName>
        <ecNumber evidence="1">3.6.1.23</ecNumber>
    </recommendedName>
    <alternativeName>
        <fullName evidence="1">dUTP pyrophosphatase</fullName>
    </alternativeName>
</protein>
<accession>A4VGS6</accession>
<keyword id="KW-0378">Hydrolase</keyword>
<keyword id="KW-0460">Magnesium</keyword>
<keyword id="KW-0479">Metal-binding</keyword>
<keyword id="KW-0546">Nucleotide metabolism</keyword>
<keyword id="KW-1185">Reference proteome</keyword>
<name>DUT_STUS1</name>
<sequence>MHALQAKILDPRLGRDFPLPEYATPGSAGLDLRAMLQQDTVLEPGQTLLIPTGLAIHIADPTLAALVLPRSGLGHKHGIVLGNLVGLIDSDYQGELMVSCWNRGQSAFTIAVGERIAQLMLVPVVQARFELVDSFDSSDRGAGGFGHSGSH</sequence>
<reference key="1">
    <citation type="journal article" date="2008" name="Proc. Natl. Acad. Sci. U.S.A.">
        <title>Nitrogen fixation island and rhizosphere competence traits in the genome of root-associated Pseudomonas stutzeri A1501.</title>
        <authorList>
            <person name="Yan Y."/>
            <person name="Yang J."/>
            <person name="Dou Y."/>
            <person name="Chen M."/>
            <person name="Ping S."/>
            <person name="Peng J."/>
            <person name="Lu W."/>
            <person name="Zhang W."/>
            <person name="Yao Z."/>
            <person name="Li H."/>
            <person name="Liu W."/>
            <person name="He S."/>
            <person name="Geng L."/>
            <person name="Zhang X."/>
            <person name="Yang F."/>
            <person name="Yu H."/>
            <person name="Zhan Y."/>
            <person name="Li D."/>
            <person name="Lin Z."/>
            <person name="Wang Y."/>
            <person name="Elmerich C."/>
            <person name="Lin M."/>
            <person name="Jin Q."/>
        </authorList>
    </citation>
    <scope>NUCLEOTIDE SEQUENCE [LARGE SCALE GENOMIC DNA]</scope>
    <source>
        <strain>A1501</strain>
    </source>
</reference>
<evidence type="ECO:0000255" key="1">
    <source>
        <dbReference type="HAMAP-Rule" id="MF_00116"/>
    </source>
</evidence>
<proteinExistence type="inferred from homology"/>